<evidence type="ECO:0000255" key="1">
    <source>
        <dbReference type="HAMAP-Rule" id="MF_00418"/>
    </source>
</evidence>
<evidence type="ECO:0000305" key="2"/>
<dbReference type="EC" id="4.3.3.7" evidence="1"/>
<dbReference type="EMBL" id="FM242711">
    <property type="protein sequence ID" value="CAS05207.1"/>
    <property type="molecule type" value="Genomic_DNA"/>
</dbReference>
<dbReference type="RefSeq" id="WP_003725378.1">
    <property type="nucleotide sequence ID" value="NC_012488.1"/>
</dbReference>
<dbReference type="SMR" id="C1L2Z1"/>
<dbReference type="KEGG" id="lmc:Lm4b_01445"/>
<dbReference type="HOGENOM" id="CLU_049343_7_1_9"/>
<dbReference type="UniPathway" id="UPA00034">
    <property type="reaction ID" value="UER00017"/>
</dbReference>
<dbReference type="GO" id="GO:0005829">
    <property type="term" value="C:cytosol"/>
    <property type="evidence" value="ECO:0007669"/>
    <property type="project" value="TreeGrafter"/>
</dbReference>
<dbReference type="GO" id="GO:0008840">
    <property type="term" value="F:4-hydroxy-tetrahydrodipicolinate synthase activity"/>
    <property type="evidence" value="ECO:0007669"/>
    <property type="project" value="UniProtKB-UniRule"/>
</dbReference>
<dbReference type="GO" id="GO:0019877">
    <property type="term" value="P:diaminopimelate biosynthetic process"/>
    <property type="evidence" value="ECO:0007669"/>
    <property type="project" value="UniProtKB-UniRule"/>
</dbReference>
<dbReference type="GO" id="GO:0009089">
    <property type="term" value="P:lysine biosynthetic process via diaminopimelate"/>
    <property type="evidence" value="ECO:0007669"/>
    <property type="project" value="UniProtKB-UniRule"/>
</dbReference>
<dbReference type="CDD" id="cd00950">
    <property type="entry name" value="DHDPS"/>
    <property type="match status" value="1"/>
</dbReference>
<dbReference type="Gene3D" id="3.20.20.70">
    <property type="entry name" value="Aldolase class I"/>
    <property type="match status" value="1"/>
</dbReference>
<dbReference type="HAMAP" id="MF_00418">
    <property type="entry name" value="DapA"/>
    <property type="match status" value="1"/>
</dbReference>
<dbReference type="InterPro" id="IPR013785">
    <property type="entry name" value="Aldolase_TIM"/>
</dbReference>
<dbReference type="InterPro" id="IPR005263">
    <property type="entry name" value="DapA"/>
</dbReference>
<dbReference type="InterPro" id="IPR002220">
    <property type="entry name" value="DapA-like"/>
</dbReference>
<dbReference type="InterPro" id="IPR020625">
    <property type="entry name" value="Schiff_base-form_aldolases_AS"/>
</dbReference>
<dbReference type="InterPro" id="IPR020624">
    <property type="entry name" value="Schiff_base-form_aldolases_CS"/>
</dbReference>
<dbReference type="NCBIfam" id="TIGR00674">
    <property type="entry name" value="dapA"/>
    <property type="match status" value="1"/>
</dbReference>
<dbReference type="PANTHER" id="PTHR12128:SF66">
    <property type="entry name" value="4-HYDROXY-2-OXOGLUTARATE ALDOLASE, MITOCHONDRIAL"/>
    <property type="match status" value="1"/>
</dbReference>
<dbReference type="PANTHER" id="PTHR12128">
    <property type="entry name" value="DIHYDRODIPICOLINATE SYNTHASE"/>
    <property type="match status" value="1"/>
</dbReference>
<dbReference type="Pfam" id="PF00701">
    <property type="entry name" value="DHDPS"/>
    <property type="match status" value="1"/>
</dbReference>
<dbReference type="PIRSF" id="PIRSF001365">
    <property type="entry name" value="DHDPS"/>
    <property type="match status" value="1"/>
</dbReference>
<dbReference type="PRINTS" id="PR00146">
    <property type="entry name" value="DHPICSNTHASE"/>
</dbReference>
<dbReference type="SMART" id="SM01130">
    <property type="entry name" value="DHDPS"/>
    <property type="match status" value="1"/>
</dbReference>
<dbReference type="SUPFAM" id="SSF51569">
    <property type="entry name" value="Aldolase"/>
    <property type="match status" value="1"/>
</dbReference>
<dbReference type="PROSITE" id="PS00665">
    <property type="entry name" value="DHDPS_1"/>
    <property type="match status" value="1"/>
</dbReference>
<dbReference type="PROSITE" id="PS00666">
    <property type="entry name" value="DHDPS_2"/>
    <property type="match status" value="1"/>
</dbReference>
<feature type="chain" id="PRO_1000206034" description="4-hydroxy-tetrahydrodipicolinate synthase">
    <location>
        <begin position="1"/>
        <end position="293"/>
    </location>
</feature>
<feature type="active site" description="Proton donor/acceptor" evidence="1">
    <location>
        <position position="136"/>
    </location>
</feature>
<feature type="active site" description="Schiff-base intermediate with substrate" evidence="1">
    <location>
        <position position="164"/>
    </location>
</feature>
<feature type="binding site" evidence="1">
    <location>
        <position position="47"/>
    </location>
    <ligand>
        <name>pyruvate</name>
        <dbReference type="ChEBI" id="CHEBI:15361"/>
    </ligand>
</feature>
<feature type="binding site" evidence="1">
    <location>
        <position position="206"/>
    </location>
    <ligand>
        <name>pyruvate</name>
        <dbReference type="ChEBI" id="CHEBI:15361"/>
    </ligand>
</feature>
<feature type="site" description="Part of a proton relay during catalysis" evidence="1">
    <location>
        <position position="46"/>
    </location>
</feature>
<feature type="site" description="Part of a proton relay during catalysis" evidence="1">
    <location>
        <position position="110"/>
    </location>
</feature>
<reference key="1">
    <citation type="journal article" date="2012" name="BMC Genomics">
        <title>Comparative genomics and transcriptomics of lineages I, II, and III strains of Listeria monocytogenes.</title>
        <authorList>
            <person name="Hain T."/>
            <person name="Ghai R."/>
            <person name="Billion A."/>
            <person name="Kuenne C.T."/>
            <person name="Steinweg C."/>
            <person name="Izar B."/>
            <person name="Mohamed W."/>
            <person name="Mraheil M."/>
            <person name="Domann E."/>
            <person name="Schaffrath S."/>
            <person name="Karst U."/>
            <person name="Goesmann A."/>
            <person name="Oehm S."/>
            <person name="Puhler A."/>
            <person name="Merkl R."/>
            <person name="Vorwerk S."/>
            <person name="Glaser P."/>
            <person name="Garrido P."/>
            <person name="Rusniok C."/>
            <person name="Buchrieser C."/>
            <person name="Goebel W."/>
            <person name="Chakraborty T."/>
        </authorList>
    </citation>
    <scope>NUCLEOTIDE SEQUENCE [LARGE SCALE GENOMIC DNA]</scope>
    <source>
        <strain>CLIP80459</strain>
    </source>
</reference>
<name>DAPA_LISMC</name>
<protein>
    <recommendedName>
        <fullName evidence="1">4-hydroxy-tetrahydrodipicolinate synthase</fullName>
        <shortName evidence="1">HTPA synthase</shortName>
        <ecNumber evidence="1">4.3.3.7</ecNumber>
    </recommendedName>
</protein>
<keyword id="KW-0028">Amino-acid biosynthesis</keyword>
<keyword id="KW-0963">Cytoplasm</keyword>
<keyword id="KW-0220">Diaminopimelate biosynthesis</keyword>
<keyword id="KW-0456">Lyase</keyword>
<keyword id="KW-0457">Lysine biosynthesis</keyword>
<keyword id="KW-0704">Schiff base</keyword>
<proteinExistence type="inferred from homology"/>
<organism>
    <name type="scientific">Listeria monocytogenes serotype 4b (strain CLIP80459)</name>
    <dbReference type="NCBI Taxonomy" id="568819"/>
    <lineage>
        <taxon>Bacteria</taxon>
        <taxon>Bacillati</taxon>
        <taxon>Bacillota</taxon>
        <taxon>Bacilli</taxon>
        <taxon>Bacillales</taxon>
        <taxon>Listeriaceae</taxon>
        <taxon>Listeria</taxon>
    </lineage>
</organism>
<gene>
    <name evidence="1" type="primary">dapA</name>
    <name type="ordered locus">Lm4b_01445</name>
</gene>
<sequence length="293" mass="31420">MDLGKVITAMVTPIHPEKDKVCKKRIHHLVNHLIKNGSDGLVIAGTTGESPTLSHDEKIKLFRQVIETNDGRAKLIAGTGSNNTAETIAFTKEVAELGGIDAVLIVAPYYNKPNQDGLYAHFAAVSEASDLPVVIYNIPGRSVVNIEPETIIRLAKLPNIVGVKESSGNLDNISKIIAETSDDFQVYSGDDSLTLPILAVGGNGVISVASHVVGNEMQEMIQAFERGEVQKAAQIHRELLPLMNGLFSVPNPAPTKYLLNQQGISVGPVRLPLVDLNAEQGTKLQAILEGLSK</sequence>
<accession>C1L2Z1</accession>
<comment type="function">
    <text evidence="1">Catalyzes the condensation of (S)-aspartate-beta-semialdehyde [(S)-ASA] and pyruvate to 4-hydroxy-tetrahydrodipicolinate (HTPA).</text>
</comment>
<comment type="catalytic activity">
    <reaction evidence="1">
        <text>L-aspartate 4-semialdehyde + pyruvate = (2S,4S)-4-hydroxy-2,3,4,5-tetrahydrodipicolinate + H2O + H(+)</text>
        <dbReference type="Rhea" id="RHEA:34171"/>
        <dbReference type="ChEBI" id="CHEBI:15361"/>
        <dbReference type="ChEBI" id="CHEBI:15377"/>
        <dbReference type="ChEBI" id="CHEBI:15378"/>
        <dbReference type="ChEBI" id="CHEBI:67139"/>
        <dbReference type="ChEBI" id="CHEBI:537519"/>
        <dbReference type="EC" id="4.3.3.7"/>
    </reaction>
</comment>
<comment type="pathway">
    <text evidence="1">Amino-acid biosynthesis; L-lysine biosynthesis via DAP pathway; (S)-tetrahydrodipicolinate from L-aspartate: step 3/4.</text>
</comment>
<comment type="subunit">
    <text evidence="1">Homotetramer; dimer of dimers.</text>
</comment>
<comment type="subcellular location">
    <subcellularLocation>
        <location evidence="1">Cytoplasm</location>
    </subcellularLocation>
</comment>
<comment type="similarity">
    <text evidence="1">Belongs to the DapA family.</text>
</comment>
<comment type="caution">
    <text evidence="2">Was originally thought to be a dihydrodipicolinate synthase (DHDPS), catalyzing the condensation of (S)-aspartate-beta-semialdehyde [(S)-ASA] and pyruvate to dihydrodipicolinate (DHDP). However, it was shown in E.coli that the product of the enzymatic reaction is not dihydrodipicolinate but in fact (4S)-4-hydroxy-2,3,4,5-tetrahydro-(2S)-dipicolinic acid (HTPA), and that the consecutive dehydration reaction leading to DHDP is not spontaneous but catalyzed by DapB.</text>
</comment>